<reference key="1">
    <citation type="journal article" date="2003" name="Proc. Natl. Acad. Sci. U.S.A.">
        <title>The complete genome sequence of Mycobacterium bovis.</title>
        <authorList>
            <person name="Garnier T."/>
            <person name="Eiglmeier K."/>
            <person name="Camus J.-C."/>
            <person name="Medina N."/>
            <person name="Mansoor H."/>
            <person name="Pryor M."/>
            <person name="Duthoy S."/>
            <person name="Grondin S."/>
            <person name="Lacroix C."/>
            <person name="Monsempe C."/>
            <person name="Simon S."/>
            <person name="Harris B."/>
            <person name="Atkin R."/>
            <person name="Doggett J."/>
            <person name="Mayes R."/>
            <person name="Keating L."/>
            <person name="Wheeler P.R."/>
            <person name="Parkhill J."/>
            <person name="Barrell B.G."/>
            <person name="Cole S.T."/>
            <person name="Gordon S.V."/>
            <person name="Hewinson R.G."/>
        </authorList>
    </citation>
    <scope>NUCLEOTIDE SEQUENCE [LARGE SCALE GENOMIC DNA]</scope>
    <source>
        <strain>ATCC BAA-935 / AF2122/97</strain>
    </source>
</reference>
<reference key="2">
    <citation type="journal article" date="2017" name="Genome Announc.">
        <title>Updated reference genome sequence and annotation of Mycobacterium bovis AF2122/97.</title>
        <authorList>
            <person name="Malone K.M."/>
            <person name="Farrell D."/>
            <person name="Stuber T.P."/>
            <person name="Schubert O.T."/>
            <person name="Aebersold R."/>
            <person name="Robbe-Austerman S."/>
            <person name="Gordon S.V."/>
        </authorList>
    </citation>
    <scope>NUCLEOTIDE SEQUENCE [LARGE SCALE GENOMIC DNA]</scope>
    <scope>GENOME REANNOTATION</scope>
    <source>
        <strain>ATCC BAA-935 / AF2122/97</strain>
    </source>
</reference>
<name>ANSP2_MYCBO</name>
<evidence type="ECO:0000250" key="1">
    <source>
        <dbReference type="UniProtKB" id="P9WQM7"/>
    </source>
</evidence>
<evidence type="ECO:0000255" key="2"/>
<evidence type="ECO:0000305" key="3"/>
<keyword id="KW-0029">Amino-acid transport</keyword>
<keyword id="KW-1003">Cell membrane</keyword>
<keyword id="KW-0472">Membrane</keyword>
<keyword id="KW-1185">Reference proteome</keyword>
<keyword id="KW-0812">Transmembrane</keyword>
<keyword id="KW-1133">Transmembrane helix</keyword>
<keyword id="KW-0813">Transport</keyword>
<dbReference type="EMBL" id="LT708304">
    <property type="protein sequence ID" value="SIT98907.1"/>
    <property type="molecule type" value="Genomic_DNA"/>
</dbReference>
<dbReference type="RefSeq" id="NP_854017.1">
    <property type="nucleotide sequence ID" value="NC_002945.3"/>
</dbReference>
<dbReference type="RefSeq" id="WP_003898409.1">
    <property type="nucleotide sequence ID" value="NC_002945.4"/>
</dbReference>
<dbReference type="SMR" id="P0A4W1"/>
<dbReference type="PATRIC" id="fig|233413.5.peg.385"/>
<dbReference type="Proteomes" id="UP000001419">
    <property type="component" value="Chromosome"/>
</dbReference>
<dbReference type="GO" id="GO:0005886">
    <property type="term" value="C:plasma membrane"/>
    <property type="evidence" value="ECO:0007669"/>
    <property type="project" value="UniProtKB-SubCell"/>
</dbReference>
<dbReference type="GO" id="GO:0006865">
    <property type="term" value="P:amino acid transport"/>
    <property type="evidence" value="ECO:0007669"/>
    <property type="project" value="UniProtKB-KW"/>
</dbReference>
<dbReference type="GO" id="GO:0055085">
    <property type="term" value="P:transmembrane transport"/>
    <property type="evidence" value="ECO:0007669"/>
    <property type="project" value="InterPro"/>
</dbReference>
<dbReference type="FunFam" id="1.20.1740.10:FF:000001">
    <property type="entry name" value="Amino acid permease"/>
    <property type="match status" value="1"/>
</dbReference>
<dbReference type="Gene3D" id="1.20.1740.10">
    <property type="entry name" value="Amino acid/polyamine transporter I"/>
    <property type="match status" value="1"/>
</dbReference>
<dbReference type="InterPro" id="IPR004841">
    <property type="entry name" value="AA-permease/SLC12A_dom"/>
</dbReference>
<dbReference type="InterPro" id="IPR004840">
    <property type="entry name" value="Amino_acid_permease_CS"/>
</dbReference>
<dbReference type="PANTHER" id="PTHR43495">
    <property type="entry name" value="GABA PERMEASE"/>
    <property type="match status" value="1"/>
</dbReference>
<dbReference type="PANTHER" id="PTHR43495:SF1">
    <property type="entry name" value="L-ASPARAGINE PERMEASE"/>
    <property type="match status" value="1"/>
</dbReference>
<dbReference type="Pfam" id="PF00324">
    <property type="entry name" value="AA_permease"/>
    <property type="match status" value="1"/>
</dbReference>
<dbReference type="PIRSF" id="PIRSF006060">
    <property type="entry name" value="AA_transporter"/>
    <property type="match status" value="1"/>
</dbReference>
<dbReference type="PROSITE" id="PS00218">
    <property type="entry name" value="AMINO_ACID_PERMEASE_1"/>
    <property type="match status" value="1"/>
</dbReference>
<protein>
    <recommendedName>
        <fullName>L-asparagine permease 2</fullName>
    </recommendedName>
    <alternativeName>
        <fullName>L-asparagine transport protein 2</fullName>
    </alternativeName>
</protein>
<proteinExistence type="inferred from homology"/>
<sequence>MPPLDITDERLTREDTGYHKGLHSRQLQMIALGGAIGTGLFLGAGGRLASAGPGLFLVYGICGIFVFLILRALGELVLHRPSSGSFVSYAREFYGEKVAFVAGWMYFLNWAMTGIVDTTAIAHYCHYWRAFQPIPQWTLALIALLVVLSMNLISVRLFGELEFWASLIKVIALVTFLIVGTVFLAGRYKIDGQETGVSLWSSHGGIVPTGLLPIVLVTSGVVFAYAAIELVGIAAGETAEPAKIMPRAINSVVLRIACFYVGSTVLLALLLPYTAYKEHVSPFVTFFSKIGIDAAGSVMNLVVLTAALSSLNAGLYSTGRILRSMAINGSGPRFTAPMSKTGVPYGGILLTAGIGLLGIILNAIKPSQAFEIVLHIAATGVIAAWATIVACQLRLHRMANAGQLQRPKFRMPLSPFSGYLTLAFLAGVLILMYFDEQHGPWMIAATVIGVPALIGGWYLVRNRVTAVAHHAIDHTKSVAVVHSADPI</sequence>
<organism>
    <name type="scientific">Mycobacterium bovis (strain ATCC BAA-935 / AF2122/97)</name>
    <dbReference type="NCBI Taxonomy" id="233413"/>
    <lineage>
        <taxon>Bacteria</taxon>
        <taxon>Bacillati</taxon>
        <taxon>Actinomycetota</taxon>
        <taxon>Actinomycetes</taxon>
        <taxon>Mycobacteriales</taxon>
        <taxon>Mycobacteriaceae</taxon>
        <taxon>Mycobacterium</taxon>
        <taxon>Mycobacterium tuberculosis complex</taxon>
    </lineage>
</organism>
<comment type="function">
    <text evidence="1">Dual function in both nitrogen assimilation and in protection against acid stress during infection. Involved in asparagine uptake.</text>
</comment>
<comment type="subcellular location">
    <subcellularLocation>
        <location evidence="3">Cell membrane</location>
        <topology evidence="2">Multi-pass membrane protein</topology>
    </subcellularLocation>
</comment>
<comment type="similarity">
    <text evidence="3">Belongs to the amino acid-polyamine-organocation (APC) superfamily. Amino acid transporter (AAT) (TC 2.A.3.1) family.</text>
</comment>
<gene>
    <name type="primary">ansP2</name>
    <name type="ordered locus">BQ2027_MB0354C</name>
</gene>
<accession>P0A4W1</accession>
<accession>A0A1R3XV15</accession>
<accession>O06297</accession>
<accession>X2BES8</accession>
<feature type="chain" id="PRO_0000054188" description="L-asparagine permease 2">
    <location>
        <begin position="1"/>
        <end position="487"/>
    </location>
</feature>
<feature type="transmembrane region" description="Helical" evidence="2">
    <location>
        <begin position="26"/>
        <end position="46"/>
    </location>
</feature>
<feature type="transmembrane region" description="Helical" evidence="2">
    <location>
        <begin position="50"/>
        <end position="70"/>
    </location>
</feature>
<feature type="transmembrane region" description="Helical" evidence="2">
    <location>
        <begin position="98"/>
        <end position="118"/>
    </location>
</feature>
<feature type="transmembrane region" description="Helical" evidence="2">
    <location>
        <begin position="133"/>
        <end position="153"/>
    </location>
</feature>
<feature type="transmembrane region" description="Helical" evidence="2">
    <location>
        <begin position="163"/>
        <end position="183"/>
    </location>
</feature>
<feature type="transmembrane region" description="Helical" evidence="2">
    <location>
        <begin position="214"/>
        <end position="234"/>
    </location>
</feature>
<feature type="transmembrane region" description="Helical" evidence="2">
    <location>
        <begin position="256"/>
        <end position="276"/>
    </location>
</feature>
<feature type="transmembrane region" description="Helical" evidence="2">
    <location>
        <begin position="290"/>
        <end position="310"/>
    </location>
</feature>
<feature type="transmembrane region" description="Helical" evidence="2">
    <location>
        <begin position="341"/>
        <end position="361"/>
    </location>
</feature>
<feature type="transmembrane region" description="Helical" evidence="2">
    <location>
        <begin position="369"/>
        <end position="389"/>
    </location>
</feature>
<feature type="transmembrane region" description="Helical" evidence="2">
    <location>
        <begin position="414"/>
        <end position="434"/>
    </location>
</feature>
<feature type="transmembrane region" description="Helical" evidence="2">
    <location>
        <begin position="440"/>
        <end position="460"/>
    </location>
</feature>